<accession>C1ANL6</accession>
<name>NADA_MYCBT</name>
<evidence type="ECO:0000255" key="1">
    <source>
        <dbReference type="HAMAP-Rule" id="MF_00568"/>
    </source>
</evidence>
<proteinExistence type="inferred from homology"/>
<comment type="function">
    <text evidence="1">Catalyzes the condensation of iminoaspartate with dihydroxyacetone phosphate to form quinolinate.</text>
</comment>
<comment type="catalytic activity">
    <reaction evidence="1">
        <text>iminosuccinate + dihydroxyacetone phosphate = quinolinate + phosphate + 2 H2O + H(+)</text>
        <dbReference type="Rhea" id="RHEA:25888"/>
        <dbReference type="ChEBI" id="CHEBI:15377"/>
        <dbReference type="ChEBI" id="CHEBI:15378"/>
        <dbReference type="ChEBI" id="CHEBI:29959"/>
        <dbReference type="ChEBI" id="CHEBI:43474"/>
        <dbReference type="ChEBI" id="CHEBI:57642"/>
        <dbReference type="ChEBI" id="CHEBI:77875"/>
        <dbReference type="EC" id="2.5.1.72"/>
    </reaction>
    <physiologicalReaction direction="left-to-right" evidence="1">
        <dbReference type="Rhea" id="RHEA:25889"/>
    </physiologicalReaction>
</comment>
<comment type="cofactor">
    <cofactor evidence="1">
        <name>[4Fe-4S] cluster</name>
        <dbReference type="ChEBI" id="CHEBI:49883"/>
    </cofactor>
    <text evidence="1">Binds 1 [4Fe-4S] cluster per subunit.</text>
</comment>
<comment type="pathway">
    <text evidence="1">Cofactor biosynthesis; NAD(+) biosynthesis; quinolinate from iminoaspartate: step 1/1.</text>
</comment>
<comment type="subcellular location">
    <subcellularLocation>
        <location evidence="1">Cytoplasm</location>
    </subcellularLocation>
</comment>
<comment type="similarity">
    <text evidence="1">Belongs to the quinolinate synthase family. Type 2 subfamily.</text>
</comment>
<organism>
    <name type="scientific">Mycobacterium bovis (strain BCG / Tokyo 172 / ATCC 35737 / TMC 1019)</name>
    <dbReference type="NCBI Taxonomy" id="561275"/>
    <lineage>
        <taxon>Bacteria</taxon>
        <taxon>Bacillati</taxon>
        <taxon>Actinomycetota</taxon>
        <taxon>Actinomycetes</taxon>
        <taxon>Mycobacteriales</taxon>
        <taxon>Mycobacteriaceae</taxon>
        <taxon>Mycobacterium</taxon>
        <taxon>Mycobacterium tuberculosis complex</taxon>
    </lineage>
</organism>
<protein>
    <recommendedName>
        <fullName evidence="1">Quinolinate synthase</fullName>
        <ecNumber evidence="1">2.5.1.72</ecNumber>
    </recommendedName>
</protein>
<gene>
    <name evidence="1" type="primary">nadA</name>
    <name type="ordered locus">JTY_1607</name>
</gene>
<keyword id="KW-0004">4Fe-4S</keyword>
<keyword id="KW-0963">Cytoplasm</keyword>
<keyword id="KW-0408">Iron</keyword>
<keyword id="KW-0411">Iron-sulfur</keyword>
<keyword id="KW-0479">Metal-binding</keyword>
<keyword id="KW-0662">Pyridine nucleotide biosynthesis</keyword>
<keyword id="KW-0808">Transferase</keyword>
<feature type="chain" id="PRO_1000146815" description="Quinolinate synthase">
    <location>
        <begin position="1"/>
        <end position="349"/>
    </location>
</feature>
<feature type="binding site" evidence="1">
    <location>
        <position position="52"/>
    </location>
    <ligand>
        <name>iminosuccinate</name>
        <dbReference type="ChEBI" id="CHEBI:77875"/>
    </ligand>
</feature>
<feature type="binding site" evidence="1">
    <location>
        <position position="69"/>
    </location>
    <ligand>
        <name>iminosuccinate</name>
        <dbReference type="ChEBI" id="CHEBI:77875"/>
    </ligand>
</feature>
<feature type="binding site" evidence="1">
    <location>
        <position position="114"/>
    </location>
    <ligand>
        <name>[4Fe-4S] cluster</name>
        <dbReference type="ChEBI" id="CHEBI:49883"/>
    </ligand>
</feature>
<feature type="binding site" evidence="1">
    <location>
        <begin position="140"/>
        <end position="142"/>
    </location>
    <ligand>
        <name>iminosuccinate</name>
        <dbReference type="ChEBI" id="CHEBI:77875"/>
    </ligand>
</feature>
<feature type="binding site" evidence="1">
    <location>
        <position position="157"/>
    </location>
    <ligand>
        <name>iminosuccinate</name>
        <dbReference type="ChEBI" id="CHEBI:77875"/>
    </ligand>
</feature>
<feature type="binding site" evidence="1">
    <location>
        <position position="201"/>
    </location>
    <ligand>
        <name>[4Fe-4S] cluster</name>
        <dbReference type="ChEBI" id="CHEBI:49883"/>
    </ligand>
</feature>
<feature type="binding site" evidence="1">
    <location>
        <begin position="227"/>
        <end position="229"/>
    </location>
    <ligand>
        <name>iminosuccinate</name>
        <dbReference type="ChEBI" id="CHEBI:77875"/>
    </ligand>
</feature>
<feature type="binding site" evidence="1">
    <location>
        <position position="255"/>
    </location>
    <ligand>
        <name>iminosuccinate</name>
        <dbReference type="ChEBI" id="CHEBI:77875"/>
    </ligand>
</feature>
<feature type="binding site" evidence="1">
    <location>
        <position position="300"/>
    </location>
    <ligand>
        <name>[4Fe-4S] cluster</name>
        <dbReference type="ChEBI" id="CHEBI:49883"/>
    </ligand>
</feature>
<dbReference type="EC" id="2.5.1.72" evidence="1"/>
<dbReference type="EMBL" id="AP010918">
    <property type="protein sequence ID" value="BAH25895.1"/>
    <property type="molecule type" value="Genomic_DNA"/>
</dbReference>
<dbReference type="RefSeq" id="WP_003407931.1">
    <property type="nucleotide sequence ID" value="NZ_CP014566.1"/>
</dbReference>
<dbReference type="SMR" id="C1ANL6"/>
<dbReference type="GeneID" id="45425562"/>
<dbReference type="KEGG" id="mbt:JTY_1607"/>
<dbReference type="HOGENOM" id="CLU_047382_0_0_11"/>
<dbReference type="UniPathway" id="UPA00253">
    <property type="reaction ID" value="UER00327"/>
</dbReference>
<dbReference type="GO" id="GO:0005829">
    <property type="term" value="C:cytosol"/>
    <property type="evidence" value="ECO:0007669"/>
    <property type="project" value="TreeGrafter"/>
</dbReference>
<dbReference type="GO" id="GO:0051539">
    <property type="term" value="F:4 iron, 4 sulfur cluster binding"/>
    <property type="evidence" value="ECO:0007669"/>
    <property type="project" value="UniProtKB-KW"/>
</dbReference>
<dbReference type="GO" id="GO:0046872">
    <property type="term" value="F:metal ion binding"/>
    <property type="evidence" value="ECO:0007669"/>
    <property type="project" value="UniProtKB-KW"/>
</dbReference>
<dbReference type="GO" id="GO:0008987">
    <property type="term" value="F:quinolinate synthetase A activity"/>
    <property type="evidence" value="ECO:0007669"/>
    <property type="project" value="UniProtKB-UniRule"/>
</dbReference>
<dbReference type="GO" id="GO:0034628">
    <property type="term" value="P:'de novo' NAD biosynthetic process from L-aspartate"/>
    <property type="evidence" value="ECO:0007669"/>
    <property type="project" value="TreeGrafter"/>
</dbReference>
<dbReference type="FunFam" id="3.40.50.10800:FF:000007">
    <property type="entry name" value="Quinolinate synthase A"/>
    <property type="match status" value="1"/>
</dbReference>
<dbReference type="Gene3D" id="3.40.50.10800">
    <property type="entry name" value="NadA-like"/>
    <property type="match status" value="3"/>
</dbReference>
<dbReference type="HAMAP" id="MF_00568">
    <property type="entry name" value="NadA_type2"/>
    <property type="match status" value="1"/>
</dbReference>
<dbReference type="InterPro" id="IPR003473">
    <property type="entry name" value="NadA"/>
</dbReference>
<dbReference type="InterPro" id="IPR036094">
    <property type="entry name" value="NadA_sf"/>
</dbReference>
<dbReference type="InterPro" id="IPR023066">
    <property type="entry name" value="Quinolinate_synth_type2"/>
</dbReference>
<dbReference type="NCBIfam" id="TIGR00550">
    <property type="entry name" value="nadA"/>
    <property type="match status" value="1"/>
</dbReference>
<dbReference type="NCBIfam" id="NF006878">
    <property type="entry name" value="PRK09375.1-2"/>
    <property type="match status" value="1"/>
</dbReference>
<dbReference type="NCBIfam" id="NF006879">
    <property type="entry name" value="PRK09375.1-4"/>
    <property type="match status" value="1"/>
</dbReference>
<dbReference type="PANTHER" id="PTHR30573:SF0">
    <property type="entry name" value="QUINOLINATE SYNTHASE, CHLOROPLASTIC"/>
    <property type="match status" value="1"/>
</dbReference>
<dbReference type="PANTHER" id="PTHR30573">
    <property type="entry name" value="QUINOLINATE SYNTHETASE A"/>
    <property type="match status" value="1"/>
</dbReference>
<dbReference type="Pfam" id="PF02445">
    <property type="entry name" value="NadA"/>
    <property type="match status" value="1"/>
</dbReference>
<dbReference type="SUPFAM" id="SSF142754">
    <property type="entry name" value="NadA-like"/>
    <property type="match status" value="1"/>
</dbReference>
<sequence length="349" mass="37408">MTVLNRTDTLVDELTADITNTPLGYGGVDGDERWAAEIRRLAHLRGATVLAHNYQLPAIQDVADHVGDSLALSRVAAEAPEDTIVFCGVHFMAETAKILSPHKTVLIPDQRAGCSLADSITPDELRAWKDEHPGAVVVSYVNTTAAVKALTDICCTSSNAVDVVASIDPDREVLFCPDQFLGAHVRRVTGRKNLHVWAGECHVHAGINGDELADQARAHPDAELFVHPECGCATSALYLAGEGAFPAERVKILSTGGMLEAAHTTRARQVLVATEVGMLHQLRRAAPEVDFRAVNDRASCKYMKMITPAALLRCLVEGADEVHVDPGIAASGRRSVQRMIEIGHPGGGE</sequence>
<reference key="1">
    <citation type="journal article" date="2009" name="Vaccine">
        <title>Whole genome sequence analysis of Mycobacterium bovis bacillus Calmette-Guerin (BCG) Tokyo 172: a comparative study of BCG vaccine substrains.</title>
        <authorList>
            <person name="Seki M."/>
            <person name="Honda I."/>
            <person name="Fujita I."/>
            <person name="Yano I."/>
            <person name="Yamamoto S."/>
            <person name="Koyama A."/>
        </authorList>
    </citation>
    <scope>NUCLEOTIDE SEQUENCE [LARGE SCALE GENOMIC DNA]</scope>
    <source>
        <strain>BCG / Tokyo 172 / ATCC 35737 / TMC 1019</strain>
    </source>
</reference>